<reference key="1">
    <citation type="submission" date="2007-08" db="EMBL/GenBank/DDBJ databases">
        <authorList>
            <consortium name="The Vibrio harveyi Genome Sequencing Project"/>
            <person name="Bassler B."/>
            <person name="Clifton S.W."/>
            <person name="Fulton L."/>
            <person name="Delehaunty K."/>
            <person name="Fronick C."/>
            <person name="Harrison M."/>
            <person name="Markivic C."/>
            <person name="Fulton R."/>
            <person name="Tin-Wollam A.-M."/>
            <person name="Shah N."/>
            <person name="Pepin K."/>
            <person name="Nash W."/>
            <person name="Thiruvilangam P."/>
            <person name="Bhonagiri V."/>
            <person name="Waters C."/>
            <person name="Tu K.C."/>
            <person name="Irgon J."/>
            <person name="Wilson R.K."/>
        </authorList>
    </citation>
    <scope>NUCLEOTIDE SEQUENCE [LARGE SCALE GENOMIC DNA]</scope>
    <source>
        <strain>ATCC BAA-1116 / BB120</strain>
    </source>
</reference>
<comment type="similarity">
    <text evidence="1">Belongs to the UPF0502 family.</text>
</comment>
<evidence type="ECO:0000255" key="1">
    <source>
        <dbReference type="HAMAP-Rule" id="MF_01584"/>
    </source>
</evidence>
<proteinExistence type="inferred from homology"/>
<feature type="chain" id="PRO_1000069306" description="UPF0502 protein VIBHAR_05349">
    <location>
        <begin position="1"/>
        <end position="217"/>
    </location>
</feature>
<dbReference type="EMBL" id="CP000790">
    <property type="protein sequence ID" value="ABU73254.1"/>
    <property type="molecule type" value="Genomic_DNA"/>
</dbReference>
<dbReference type="RefSeq" id="WP_012129027.1">
    <property type="nucleotide sequence ID" value="NC_022270.1"/>
</dbReference>
<dbReference type="SMR" id="A7N3Y9"/>
<dbReference type="KEGG" id="vha:VIBHAR_05349"/>
<dbReference type="PATRIC" id="fig|338187.25.peg.4885"/>
<dbReference type="Proteomes" id="UP000008152">
    <property type="component" value="Chromosome II"/>
</dbReference>
<dbReference type="Gene3D" id="1.10.10.10">
    <property type="entry name" value="Winged helix-like DNA-binding domain superfamily/Winged helix DNA-binding domain"/>
    <property type="match status" value="2"/>
</dbReference>
<dbReference type="HAMAP" id="MF_01584">
    <property type="entry name" value="UPF0502"/>
    <property type="match status" value="1"/>
</dbReference>
<dbReference type="InterPro" id="IPR007432">
    <property type="entry name" value="DUF480"/>
</dbReference>
<dbReference type="InterPro" id="IPR036388">
    <property type="entry name" value="WH-like_DNA-bd_sf"/>
</dbReference>
<dbReference type="InterPro" id="IPR036390">
    <property type="entry name" value="WH_DNA-bd_sf"/>
</dbReference>
<dbReference type="PANTHER" id="PTHR38768">
    <property type="entry name" value="UPF0502 PROTEIN YCEH"/>
    <property type="match status" value="1"/>
</dbReference>
<dbReference type="PANTHER" id="PTHR38768:SF1">
    <property type="entry name" value="UPF0502 PROTEIN YCEH"/>
    <property type="match status" value="1"/>
</dbReference>
<dbReference type="Pfam" id="PF04337">
    <property type="entry name" value="DUF480"/>
    <property type="match status" value="1"/>
</dbReference>
<dbReference type="SUPFAM" id="SSF46785">
    <property type="entry name" value="Winged helix' DNA-binding domain"/>
    <property type="match status" value="2"/>
</dbReference>
<protein>
    <recommendedName>
        <fullName evidence="1">UPF0502 protein VIBHAR_05349</fullName>
    </recommendedName>
</protein>
<organism>
    <name type="scientific">Vibrio campbellii (strain ATCC BAA-1116)</name>
    <dbReference type="NCBI Taxonomy" id="2902295"/>
    <lineage>
        <taxon>Bacteria</taxon>
        <taxon>Pseudomonadati</taxon>
        <taxon>Pseudomonadota</taxon>
        <taxon>Gammaproteobacteria</taxon>
        <taxon>Vibrionales</taxon>
        <taxon>Vibrionaceae</taxon>
        <taxon>Vibrio</taxon>
    </lineage>
</organism>
<name>Y5349_VIBC1</name>
<sequence>MKVELTAIEARVIGCLIEKEVTTPDQYPLSLNALTNACNQKSNREPVMSLSEADVLYAVDALIERRLVSDESGFNSRVSKYQHRFCNTEFGDLKLTKQEKGIVCCMLLRGAQTPGEIRTRTNRLATFNDVKEVENVLEHLANDEKGPLVVKLPREAGKRESRYMHLFCGEVDVSELAVATTAPSSAGSERITQLEQEVAELREELAALKEQVESLFS</sequence>
<accession>A7N3Y9</accession>
<gene>
    <name type="ordered locus">VIBHAR_05349</name>
</gene>